<sequence>MTAVSTTATTVLQATQSDVLQEIQSNFLLNSSIWVNIALAGVVILLFVAMGRDLESPRAKLIWVATMLVPLVSISSYAGLASGLTVGFLQMPPGHALAGQEVLSPWGRYLTWTFSTPMILLALGLLADTDIASLFTAITMDIGMCVTGLAAALITSSHLLRWVFYGISCAFFVAVLYVLLVQWPADAEAAGTSEIFGTLKILTVVLWLGYPILWALGSEGVALLSVGVTSWGYSGLDILAKYVFAFLLLRWVAANEGTVSGSGMGIGSGGAAPADD</sequence>
<evidence type="ECO:0000250" key="1"/>
<evidence type="ECO:0000269" key="2">
    <source>
    </source>
</evidence>
<evidence type="ECO:0000303" key="3">
    <source>
    </source>
</evidence>
<evidence type="ECO:0000305" key="4"/>
<gene>
    <name evidence="3" type="primary">hop</name>
</gene>
<keyword id="KW-1003">Cell membrane</keyword>
<keyword id="KW-0157">Chromophore</keyword>
<keyword id="KW-0406">Ion transport</keyword>
<keyword id="KW-0472">Membrane</keyword>
<keyword id="KW-0600">Photoreceptor protein</keyword>
<keyword id="KW-0675">Receptor</keyword>
<keyword id="KW-0681">Retinal protein</keyword>
<keyword id="KW-0716">Sensory transduction</keyword>
<keyword id="KW-0812">Transmembrane</keyword>
<keyword id="KW-1133">Transmembrane helix</keyword>
<keyword id="KW-0813">Transport</keyword>
<name>BACH_HALHS</name>
<organism>
    <name type="scientific">Halobacterium halobium (strain shark)</name>
    <dbReference type="NCBI Taxonomy" id="33005"/>
    <lineage>
        <taxon>Archaea</taxon>
        <taxon>Methanobacteriati</taxon>
        <taxon>Methanobacteriota</taxon>
        <taxon>Stenosarchaea group</taxon>
        <taxon>Halobacteria</taxon>
        <taxon>Halobacteriales</taxon>
        <taxon>Halobacteriaceae</taxon>
        <taxon>Halobacterium</taxon>
    </lineage>
</organism>
<proteinExistence type="evidence at protein level"/>
<reference key="1">
    <citation type="journal article" date="1995" name="Biochim. Biophys. Acta">
        <title>Over-expression of a new photo-active halorhodopsin in Halobacterium salinarium.</title>
        <authorList>
            <person name="Otomo J."/>
            <person name="Muramatsu T."/>
        </authorList>
    </citation>
    <scope>NUCLEOTIDE SEQUENCE [GENOMIC DNA]</scope>
    <scope>FUNCTION</scope>
    <scope>BIOPHYSICOCHEMICAL PROPERTIES</scope>
    <scope>SUBCELLULAR LOCATION</scope>
    <source>
        <strain>shark</strain>
    </source>
</reference>
<protein>
    <recommendedName>
        <fullName evidence="3">Halorhodopsin</fullName>
        <shortName evidence="3">HR</shortName>
    </recommendedName>
</protein>
<feature type="propeptide" id="PRO_0000020242" evidence="1">
    <location>
        <begin position="1"/>
        <end position="21"/>
    </location>
</feature>
<feature type="chain" id="PRO_0000020243" description="Halorhodopsin">
    <location>
        <begin position="22"/>
        <end position="276"/>
    </location>
</feature>
<feature type="topological domain" description="Extracellular" evidence="1">
    <location>
        <begin position="22"/>
        <end position="25"/>
    </location>
</feature>
<feature type="transmembrane region" description="Helical; Name=Helix A" evidence="1">
    <location>
        <begin position="26"/>
        <end position="51"/>
    </location>
</feature>
<feature type="topological domain" description="Cytoplasmic" evidence="1">
    <location>
        <begin position="52"/>
        <end position="57"/>
    </location>
</feature>
<feature type="transmembrane region" description="Helical; Name=Helix B" evidence="1">
    <location>
        <begin position="58"/>
        <end position="81"/>
    </location>
</feature>
<feature type="topological domain" description="Extracellular" evidence="1">
    <location>
        <begin position="82"/>
        <end position="105"/>
    </location>
</feature>
<feature type="transmembrane region" description="Helical; Name=Helix C" evidence="1">
    <location>
        <begin position="106"/>
        <end position="127"/>
    </location>
</feature>
<feature type="topological domain" description="Cytoplasmic" evidence="1">
    <location>
        <begin position="128"/>
        <end position="130"/>
    </location>
</feature>
<feature type="transmembrane region" description="Helical; Name=Helix D" evidence="1">
    <location>
        <begin position="131"/>
        <end position="154"/>
    </location>
</feature>
<feature type="topological domain" description="Extracellular" evidence="1">
    <location>
        <begin position="155"/>
        <end position="157"/>
    </location>
</feature>
<feature type="transmembrane region" description="Helical; Name=Helix E" evidence="1">
    <location>
        <begin position="158"/>
        <end position="180"/>
    </location>
</feature>
<feature type="topological domain" description="Cytoplasmic" evidence="1">
    <location>
        <begin position="181"/>
        <end position="192"/>
    </location>
</feature>
<feature type="transmembrane region" description="Helical; Name=Helix F" evidence="1">
    <location>
        <begin position="193"/>
        <end position="216"/>
    </location>
</feature>
<feature type="topological domain" description="Extracellular" evidence="1">
    <location>
        <begin position="217"/>
        <end position="225"/>
    </location>
</feature>
<feature type="transmembrane region" description="Helical; Name=Helix G" evidence="1">
    <location>
        <begin position="226"/>
        <end position="254"/>
    </location>
</feature>
<feature type="topological domain" description="Cytoplasmic" evidence="1">
    <location>
        <begin position="255"/>
        <end position="276"/>
    </location>
</feature>
<feature type="modified residue" description="N6-(retinylidene)lysine" evidence="1">
    <location>
        <position position="241"/>
    </location>
</feature>
<accession>Q48314</accession>
<dbReference type="EMBL" id="D43765">
    <property type="protein sequence ID" value="BAA07822.1"/>
    <property type="molecule type" value="Genomic_DNA"/>
</dbReference>
<dbReference type="SMR" id="Q48314"/>
<dbReference type="GO" id="GO:0005886">
    <property type="term" value="C:plasma membrane"/>
    <property type="evidence" value="ECO:0007669"/>
    <property type="project" value="UniProtKB-SubCell"/>
</dbReference>
<dbReference type="GO" id="GO:0005216">
    <property type="term" value="F:monoatomic ion channel activity"/>
    <property type="evidence" value="ECO:0007669"/>
    <property type="project" value="InterPro"/>
</dbReference>
<dbReference type="GO" id="GO:0009881">
    <property type="term" value="F:photoreceptor activity"/>
    <property type="evidence" value="ECO:0007669"/>
    <property type="project" value="UniProtKB-KW"/>
</dbReference>
<dbReference type="GO" id="GO:0007602">
    <property type="term" value="P:phototransduction"/>
    <property type="evidence" value="ECO:0007669"/>
    <property type="project" value="UniProtKB-KW"/>
</dbReference>
<dbReference type="CDD" id="cd15243">
    <property type="entry name" value="7tm_Halorhodopsin"/>
    <property type="match status" value="1"/>
</dbReference>
<dbReference type="Gene3D" id="1.20.1070.10">
    <property type="entry name" value="Rhodopsin 7-helix transmembrane proteins"/>
    <property type="match status" value="1"/>
</dbReference>
<dbReference type="InterPro" id="IPR001425">
    <property type="entry name" value="Arc/bac/fun_rhodopsins"/>
</dbReference>
<dbReference type="InterPro" id="IPR018229">
    <property type="entry name" value="Rhodopsin_retinal_BS"/>
</dbReference>
<dbReference type="PANTHER" id="PTHR28286">
    <property type="match status" value="1"/>
</dbReference>
<dbReference type="PANTHER" id="PTHR28286:SF2">
    <property type="entry name" value="BACTERIORHODOPSIN _OPSIN, NOPA (EUROFUNG)"/>
    <property type="match status" value="1"/>
</dbReference>
<dbReference type="Pfam" id="PF01036">
    <property type="entry name" value="Bac_rhodopsin"/>
    <property type="match status" value="1"/>
</dbReference>
<dbReference type="PRINTS" id="PR00251">
    <property type="entry name" value="BACTRLOPSIN"/>
</dbReference>
<dbReference type="SMART" id="SM01021">
    <property type="entry name" value="Bac_rhodopsin"/>
    <property type="match status" value="1"/>
</dbReference>
<dbReference type="SUPFAM" id="SSF81321">
    <property type="entry name" value="Family A G protein-coupled receptor-like"/>
    <property type="match status" value="1"/>
</dbReference>
<dbReference type="PROSITE" id="PS00950">
    <property type="entry name" value="BACTERIAL_OPSIN_1"/>
    <property type="match status" value="1"/>
</dbReference>
<dbReference type="PROSITE" id="PS00327">
    <property type="entry name" value="BACTERIAL_OPSIN_RET"/>
    <property type="match status" value="1"/>
</dbReference>
<comment type="function">
    <text evidence="2">Light-driven anion pump.</text>
</comment>
<comment type="biophysicochemical properties">
    <absorption>
        <max evidence="2">~596 nm</max>
        <text evidence="2">The addition of chloride or nitrate, but not sulfate, at a concentration of 1000 mM leads to a shift in the absorption maximum to about 575-580 nm.</text>
    </absorption>
</comment>
<comment type="subcellular location">
    <subcellularLocation>
        <location evidence="2">Cell membrane</location>
        <topology>Multi-pass membrane protein</topology>
    </subcellularLocation>
</comment>
<comment type="similarity">
    <text evidence="4">Belongs to the archaeal/bacterial/fungal opsin family.</text>
</comment>